<name>Y044_SIFVH</name>
<accession>Q914I8</accession>
<organismHost>
    <name type="scientific">Saccharolobus islandicus</name>
    <name type="common">Sulfolobus islandicus</name>
    <dbReference type="NCBI Taxonomy" id="43080"/>
</organismHost>
<gene>
    <name type="primary">SIFV0044</name>
</gene>
<reference key="1">
    <citation type="journal article" date="2000" name="Virology">
        <title>A novel lipothrixvirus, SIFV, of the extremely thermophilic crenarchaeon Sulfolobus.</title>
        <authorList>
            <person name="Arnold H.P."/>
            <person name="Zillig W."/>
            <person name="Ziese U."/>
            <person name="Holz I."/>
            <person name="Crosby M."/>
            <person name="Utterback T."/>
            <person name="Weidmann J.F."/>
            <person name="Umayam L.A."/>
            <person name="Teffera K."/>
            <person name="Kristjanson J.K."/>
            <person name="Klenk H.P."/>
            <person name="Nelson K.E."/>
            <person name="Fraser C.M."/>
        </authorList>
    </citation>
    <scope>NUCLEOTIDE SEQUENCE [GENOMIC DNA]</scope>
</reference>
<feature type="chain" id="PRO_0000385421" description="Uncharacterized protein 44">
    <location>
        <begin position="1"/>
        <end position="156"/>
    </location>
</feature>
<organism>
    <name type="scientific">Sulfolobus islandicus filamentous virus (isolate Iceland/Hveragerdi)</name>
    <name type="common">SIFV</name>
    <dbReference type="NCBI Taxonomy" id="654908"/>
    <lineage>
        <taxon>Viruses</taxon>
        <taxon>Adnaviria</taxon>
        <taxon>Zilligvirae</taxon>
        <taxon>Taleaviricota</taxon>
        <taxon>Tokiviricetes</taxon>
        <taxon>Ligamenvirales</taxon>
        <taxon>Lipothrixviridae</taxon>
        <taxon>Betalipothrixvirus</taxon>
        <taxon>Sulfolobus islandicus filamentous virus</taxon>
    </lineage>
</organism>
<dbReference type="EMBL" id="AF440571">
    <property type="protein sequence ID" value="AAL27753.1"/>
    <property type="molecule type" value="Genomic_DNA"/>
</dbReference>
<dbReference type="RefSeq" id="NP_445707.1">
    <property type="nucleotide sequence ID" value="NC_003214.2"/>
</dbReference>
<dbReference type="SMR" id="Q914I8"/>
<dbReference type="GeneID" id="922294"/>
<dbReference type="KEGG" id="vg:922294"/>
<dbReference type="Proteomes" id="UP000007017">
    <property type="component" value="Segment"/>
</dbReference>
<sequence>MVAKVFYMCPIDYKDILTLDLETRSVGIRKCDHVFGYIIPPSHSVREDEICPKQYRIRSWHIGKAIYGVCISFENGVKYVVRDIKKLKEILEELLNYPKDQIIYFILGEFEREKIIDMIKDMIKDMFVGYKANNEFCTPKTITIIGVLNKVTIYFL</sequence>
<keyword id="KW-1185">Reference proteome</keyword>
<protein>
    <recommendedName>
        <fullName>Uncharacterized protein 44</fullName>
    </recommendedName>
</protein>
<proteinExistence type="predicted"/>